<name>GPDA_LIMRJ</name>
<protein>
    <recommendedName>
        <fullName evidence="1">Glycerol-3-phosphate dehydrogenase [NAD(P)+]</fullName>
        <ecNumber evidence="1">1.1.1.94</ecNumber>
    </recommendedName>
    <alternativeName>
        <fullName evidence="1">NAD(P)(+)-dependent glycerol-3-phosphate dehydrogenase</fullName>
    </alternativeName>
    <alternativeName>
        <fullName evidence="1">NAD(P)H-dependent dihydroxyacetone-phosphate reductase</fullName>
    </alternativeName>
</protein>
<dbReference type="EC" id="1.1.1.94" evidence="1"/>
<dbReference type="EMBL" id="AP007281">
    <property type="protein sequence ID" value="BAG24876.1"/>
    <property type="molecule type" value="Genomic_DNA"/>
</dbReference>
<dbReference type="RefSeq" id="WP_003667443.1">
    <property type="nucleotide sequence ID" value="NC_010609.1"/>
</dbReference>
<dbReference type="SMR" id="B2G5Z4"/>
<dbReference type="KEGG" id="lrf:LAR_0360"/>
<dbReference type="HOGENOM" id="CLU_033449_0_2_9"/>
<dbReference type="UniPathway" id="UPA00940"/>
<dbReference type="GO" id="GO:0005829">
    <property type="term" value="C:cytosol"/>
    <property type="evidence" value="ECO:0007669"/>
    <property type="project" value="TreeGrafter"/>
</dbReference>
<dbReference type="GO" id="GO:0047952">
    <property type="term" value="F:glycerol-3-phosphate dehydrogenase [NAD(P)+] activity"/>
    <property type="evidence" value="ECO:0007669"/>
    <property type="project" value="UniProtKB-UniRule"/>
</dbReference>
<dbReference type="GO" id="GO:0051287">
    <property type="term" value="F:NAD binding"/>
    <property type="evidence" value="ECO:0007669"/>
    <property type="project" value="InterPro"/>
</dbReference>
<dbReference type="GO" id="GO:0005975">
    <property type="term" value="P:carbohydrate metabolic process"/>
    <property type="evidence" value="ECO:0007669"/>
    <property type="project" value="InterPro"/>
</dbReference>
<dbReference type="GO" id="GO:0046167">
    <property type="term" value="P:glycerol-3-phosphate biosynthetic process"/>
    <property type="evidence" value="ECO:0007669"/>
    <property type="project" value="UniProtKB-UniRule"/>
</dbReference>
<dbReference type="GO" id="GO:0046168">
    <property type="term" value="P:glycerol-3-phosphate catabolic process"/>
    <property type="evidence" value="ECO:0007669"/>
    <property type="project" value="InterPro"/>
</dbReference>
<dbReference type="GO" id="GO:0006650">
    <property type="term" value="P:glycerophospholipid metabolic process"/>
    <property type="evidence" value="ECO:0007669"/>
    <property type="project" value="UniProtKB-UniRule"/>
</dbReference>
<dbReference type="GO" id="GO:0008654">
    <property type="term" value="P:phospholipid biosynthetic process"/>
    <property type="evidence" value="ECO:0007669"/>
    <property type="project" value="UniProtKB-KW"/>
</dbReference>
<dbReference type="FunFam" id="1.10.1040.10:FF:000001">
    <property type="entry name" value="Glycerol-3-phosphate dehydrogenase [NAD(P)+]"/>
    <property type="match status" value="1"/>
</dbReference>
<dbReference type="FunFam" id="3.40.50.720:FF:000019">
    <property type="entry name" value="Glycerol-3-phosphate dehydrogenase [NAD(P)+]"/>
    <property type="match status" value="1"/>
</dbReference>
<dbReference type="Gene3D" id="1.10.1040.10">
    <property type="entry name" value="N-(1-d-carboxylethyl)-l-norvaline Dehydrogenase, domain 2"/>
    <property type="match status" value="1"/>
</dbReference>
<dbReference type="Gene3D" id="3.40.50.720">
    <property type="entry name" value="NAD(P)-binding Rossmann-like Domain"/>
    <property type="match status" value="1"/>
</dbReference>
<dbReference type="HAMAP" id="MF_00394">
    <property type="entry name" value="NAD_Glyc3P_dehydrog"/>
    <property type="match status" value="1"/>
</dbReference>
<dbReference type="InterPro" id="IPR008927">
    <property type="entry name" value="6-PGluconate_DH-like_C_sf"/>
</dbReference>
<dbReference type="InterPro" id="IPR013328">
    <property type="entry name" value="6PGD_dom2"/>
</dbReference>
<dbReference type="InterPro" id="IPR006168">
    <property type="entry name" value="G3P_DH_NAD-dep"/>
</dbReference>
<dbReference type="InterPro" id="IPR006109">
    <property type="entry name" value="G3P_DH_NAD-dep_C"/>
</dbReference>
<dbReference type="InterPro" id="IPR011128">
    <property type="entry name" value="G3P_DH_NAD-dep_N"/>
</dbReference>
<dbReference type="InterPro" id="IPR036291">
    <property type="entry name" value="NAD(P)-bd_dom_sf"/>
</dbReference>
<dbReference type="NCBIfam" id="NF000940">
    <property type="entry name" value="PRK00094.1-2"/>
    <property type="match status" value="1"/>
</dbReference>
<dbReference type="NCBIfam" id="NF000941">
    <property type="entry name" value="PRK00094.1-3"/>
    <property type="match status" value="1"/>
</dbReference>
<dbReference type="NCBIfam" id="NF000942">
    <property type="entry name" value="PRK00094.1-4"/>
    <property type="match status" value="1"/>
</dbReference>
<dbReference type="PANTHER" id="PTHR11728">
    <property type="entry name" value="GLYCEROL-3-PHOSPHATE DEHYDROGENASE"/>
    <property type="match status" value="1"/>
</dbReference>
<dbReference type="PANTHER" id="PTHR11728:SF1">
    <property type="entry name" value="GLYCEROL-3-PHOSPHATE DEHYDROGENASE [NAD(+)] 2, CHLOROPLASTIC"/>
    <property type="match status" value="1"/>
</dbReference>
<dbReference type="Pfam" id="PF07479">
    <property type="entry name" value="NAD_Gly3P_dh_C"/>
    <property type="match status" value="1"/>
</dbReference>
<dbReference type="Pfam" id="PF01210">
    <property type="entry name" value="NAD_Gly3P_dh_N"/>
    <property type="match status" value="1"/>
</dbReference>
<dbReference type="PIRSF" id="PIRSF000114">
    <property type="entry name" value="Glycerol-3-P_dh"/>
    <property type="match status" value="1"/>
</dbReference>
<dbReference type="PRINTS" id="PR00077">
    <property type="entry name" value="GPDHDRGNASE"/>
</dbReference>
<dbReference type="SUPFAM" id="SSF48179">
    <property type="entry name" value="6-phosphogluconate dehydrogenase C-terminal domain-like"/>
    <property type="match status" value="1"/>
</dbReference>
<dbReference type="SUPFAM" id="SSF51735">
    <property type="entry name" value="NAD(P)-binding Rossmann-fold domains"/>
    <property type="match status" value="1"/>
</dbReference>
<reference key="1">
    <citation type="journal article" date="2008" name="DNA Res.">
        <title>Comparative genome analysis of Lactobacillus reuteri and Lactobacillus fermentum reveal a genomic island for reuterin and cobalamin production.</title>
        <authorList>
            <person name="Morita H."/>
            <person name="Toh H."/>
            <person name="Fukuda S."/>
            <person name="Horikawa H."/>
            <person name="Oshima K."/>
            <person name="Suzuki T."/>
            <person name="Murakami M."/>
            <person name="Hisamatsu S."/>
            <person name="Kato Y."/>
            <person name="Takizawa T."/>
            <person name="Fukuoka H."/>
            <person name="Yoshimura T."/>
            <person name="Itoh K."/>
            <person name="O'Sullivan D.J."/>
            <person name="McKay L.L."/>
            <person name="Ohno H."/>
            <person name="Kikuchi J."/>
            <person name="Masaoka T."/>
            <person name="Hattori M."/>
        </authorList>
    </citation>
    <scope>NUCLEOTIDE SEQUENCE [LARGE SCALE GENOMIC DNA]</scope>
    <source>
        <strain>JCM 1112</strain>
    </source>
</reference>
<sequence length="338" mass="36905">MAEKIAVLGAGSWGSVLANMLTENGHDVTLWSRNEEQVKQLNTEHTNPRYMKDFVYSTNLTATTDMKKAVKGASVVLIVIPTKGLREVAKQLNAILTELHQKPLVIHATKGLEQNTYKRPSEMLSEDISPENRQAIVVLSGPSHAEDVAIKDMTAVTAACEDLASAKKAQKLFSNSYFRVYTNDDVIGAEFGAALKNIIAIGAGAIQGLGYHDNARAALITRGLAEIRRLGVAFGANPMTFIGLSGVGDLVVTATSKNSRNWRAGYQLGQGKKLQDVIDNMGMVIEGVYTTKAAYELSRKRQVQMPITEALYRVLYEGEDIKTAISQLMDRDLTSENE</sequence>
<gene>
    <name evidence="1" type="primary">gpsA</name>
    <name type="ordered locus">LAR_0360</name>
</gene>
<keyword id="KW-0963">Cytoplasm</keyword>
<keyword id="KW-0444">Lipid biosynthesis</keyword>
<keyword id="KW-0443">Lipid metabolism</keyword>
<keyword id="KW-0520">NAD</keyword>
<keyword id="KW-0521">NADP</keyword>
<keyword id="KW-0547">Nucleotide-binding</keyword>
<keyword id="KW-0560">Oxidoreductase</keyword>
<keyword id="KW-0594">Phospholipid biosynthesis</keyword>
<keyword id="KW-1208">Phospholipid metabolism</keyword>
<proteinExistence type="inferred from homology"/>
<evidence type="ECO:0000255" key="1">
    <source>
        <dbReference type="HAMAP-Rule" id="MF_00394"/>
    </source>
</evidence>
<comment type="function">
    <text evidence="1">Catalyzes the reduction of the glycolytic intermediate dihydroxyacetone phosphate (DHAP) to sn-glycerol 3-phosphate (G3P), the key precursor for phospholipid synthesis.</text>
</comment>
<comment type="catalytic activity">
    <reaction evidence="1">
        <text>sn-glycerol 3-phosphate + NAD(+) = dihydroxyacetone phosphate + NADH + H(+)</text>
        <dbReference type="Rhea" id="RHEA:11092"/>
        <dbReference type="ChEBI" id="CHEBI:15378"/>
        <dbReference type="ChEBI" id="CHEBI:57540"/>
        <dbReference type="ChEBI" id="CHEBI:57597"/>
        <dbReference type="ChEBI" id="CHEBI:57642"/>
        <dbReference type="ChEBI" id="CHEBI:57945"/>
        <dbReference type="EC" id="1.1.1.94"/>
    </reaction>
    <physiologicalReaction direction="right-to-left" evidence="1">
        <dbReference type="Rhea" id="RHEA:11094"/>
    </physiologicalReaction>
</comment>
<comment type="catalytic activity">
    <reaction evidence="1">
        <text>sn-glycerol 3-phosphate + NADP(+) = dihydroxyacetone phosphate + NADPH + H(+)</text>
        <dbReference type="Rhea" id="RHEA:11096"/>
        <dbReference type="ChEBI" id="CHEBI:15378"/>
        <dbReference type="ChEBI" id="CHEBI:57597"/>
        <dbReference type="ChEBI" id="CHEBI:57642"/>
        <dbReference type="ChEBI" id="CHEBI:57783"/>
        <dbReference type="ChEBI" id="CHEBI:58349"/>
        <dbReference type="EC" id="1.1.1.94"/>
    </reaction>
    <physiologicalReaction direction="right-to-left" evidence="1">
        <dbReference type="Rhea" id="RHEA:11098"/>
    </physiologicalReaction>
</comment>
<comment type="pathway">
    <text evidence="1">Membrane lipid metabolism; glycerophospholipid metabolism.</text>
</comment>
<comment type="subcellular location">
    <subcellularLocation>
        <location evidence="1">Cytoplasm</location>
    </subcellularLocation>
</comment>
<comment type="similarity">
    <text evidence="1">Belongs to the NAD-dependent glycerol-3-phosphate dehydrogenase family.</text>
</comment>
<organism>
    <name type="scientific">Limosilactobacillus reuteri subsp. reuteri (strain JCM 1112)</name>
    <name type="common">Lactobacillus reuteri</name>
    <dbReference type="NCBI Taxonomy" id="557433"/>
    <lineage>
        <taxon>Bacteria</taxon>
        <taxon>Bacillati</taxon>
        <taxon>Bacillota</taxon>
        <taxon>Bacilli</taxon>
        <taxon>Lactobacillales</taxon>
        <taxon>Lactobacillaceae</taxon>
        <taxon>Limosilactobacillus</taxon>
    </lineage>
</organism>
<accession>B2G5Z4</accession>
<feature type="chain" id="PRO_1000190162" description="Glycerol-3-phosphate dehydrogenase [NAD(P)+]">
    <location>
        <begin position="1"/>
        <end position="338"/>
    </location>
</feature>
<feature type="active site" description="Proton acceptor" evidence="1">
    <location>
        <position position="196"/>
    </location>
</feature>
<feature type="binding site" evidence="1">
    <location>
        <position position="12"/>
    </location>
    <ligand>
        <name>NADPH</name>
        <dbReference type="ChEBI" id="CHEBI:57783"/>
    </ligand>
</feature>
<feature type="binding site" evidence="1">
    <location>
        <position position="13"/>
    </location>
    <ligand>
        <name>NADPH</name>
        <dbReference type="ChEBI" id="CHEBI:57783"/>
    </ligand>
</feature>
<feature type="binding site" evidence="1">
    <location>
        <position position="33"/>
    </location>
    <ligand>
        <name>NADPH</name>
        <dbReference type="ChEBI" id="CHEBI:57783"/>
    </ligand>
</feature>
<feature type="binding site" evidence="1">
    <location>
        <position position="110"/>
    </location>
    <ligand>
        <name>NADPH</name>
        <dbReference type="ChEBI" id="CHEBI:57783"/>
    </ligand>
</feature>
<feature type="binding site" evidence="1">
    <location>
        <position position="110"/>
    </location>
    <ligand>
        <name>sn-glycerol 3-phosphate</name>
        <dbReference type="ChEBI" id="CHEBI:57597"/>
    </ligand>
</feature>
<feature type="binding site" evidence="1">
    <location>
        <position position="141"/>
    </location>
    <ligand>
        <name>sn-glycerol 3-phosphate</name>
        <dbReference type="ChEBI" id="CHEBI:57597"/>
    </ligand>
</feature>
<feature type="binding site" evidence="1">
    <location>
        <position position="143"/>
    </location>
    <ligand>
        <name>sn-glycerol 3-phosphate</name>
        <dbReference type="ChEBI" id="CHEBI:57597"/>
    </ligand>
</feature>
<feature type="binding site" evidence="1">
    <location>
        <position position="145"/>
    </location>
    <ligand>
        <name>NADPH</name>
        <dbReference type="ChEBI" id="CHEBI:57783"/>
    </ligand>
</feature>
<feature type="binding site" evidence="1">
    <location>
        <position position="196"/>
    </location>
    <ligand>
        <name>sn-glycerol 3-phosphate</name>
        <dbReference type="ChEBI" id="CHEBI:57597"/>
    </ligand>
</feature>
<feature type="binding site" evidence="1">
    <location>
        <position position="249"/>
    </location>
    <ligand>
        <name>sn-glycerol 3-phosphate</name>
        <dbReference type="ChEBI" id="CHEBI:57597"/>
    </ligand>
</feature>
<feature type="binding site" evidence="1">
    <location>
        <position position="259"/>
    </location>
    <ligand>
        <name>sn-glycerol 3-phosphate</name>
        <dbReference type="ChEBI" id="CHEBI:57597"/>
    </ligand>
</feature>
<feature type="binding site" evidence="1">
    <location>
        <position position="260"/>
    </location>
    <ligand>
        <name>NADPH</name>
        <dbReference type="ChEBI" id="CHEBI:57783"/>
    </ligand>
</feature>
<feature type="binding site" evidence="1">
    <location>
        <position position="260"/>
    </location>
    <ligand>
        <name>sn-glycerol 3-phosphate</name>
        <dbReference type="ChEBI" id="CHEBI:57597"/>
    </ligand>
</feature>
<feature type="binding site" evidence="1">
    <location>
        <position position="261"/>
    </location>
    <ligand>
        <name>sn-glycerol 3-phosphate</name>
        <dbReference type="ChEBI" id="CHEBI:57597"/>
    </ligand>
</feature>
<feature type="binding site" evidence="1">
    <location>
        <position position="284"/>
    </location>
    <ligand>
        <name>NADPH</name>
        <dbReference type="ChEBI" id="CHEBI:57783"/>
    </ligand>
</feature>
<feature type="binding site" evidence="1">
    <location>
        <position position="286"/>
    </location>
    <ligand>
        <name>NADPH</name>
        <dbReference type="ChEBI" id="CHEBI:57783"/>
    </ligand>
</feature>